<reference evidence="11" key="1">
    <citation type="journal article" date="2006" name="Gene">
        <title>Venom gland EST analysis of the saw-scaled viper, Echis ocellatus, reveals novel alpha9beta1 integrin-binding motifs in venom metalloproteinases and a new group of putative toxins, renin-like aspartic proteases.</title>
        <authorList>
            <person name="Wagstaff S.C."/>
            <person name="Harrison R.A."/>
        </authorList>
    </citation>
    <scope>NUCLEOTIDE SEQUENCE [MRNA]</scope>
    <source>
        <tissue evidence="11">Venom gland</tissue>
    </source>
</reference>
<reference key="2">
    <citation type="journal article" date="2017" name="Toxicon">
        <title>Isolation and characterization of renin-like aspartic-proteases from Echis ocellatus venom.</title>
        <authorList>
            <person name="Wilkinson M.C."/>
            <person name="Nightingale D.J.H."/>
            <person name="Harrison R.A."/>
            <person name="Wagstaff S.C."/>
        </authorList>
    </citation>
    <scope>PROTEIN SEQUENCE OF 76-93; 94-108; 149-157; 194-210; 211-223 AND 224-254</scope>
    <scope>FUNCTION</scope>
    <scope>CATALYTIC ACTIVITY</scope>
    <scope>ACTIVITY REGULATION</scope>
    <scope>SUBCELLULAR LOCATION</scope>
    <scope>TISSUE SPECIFICITY</scope>
    <scope>GLYCOSYLATION</scope>
    <source>
        <tissue evidence="9">Venom</tissue>
    </source>
</reference>
<dbReference type="EC" id="3.4.23.15" evidence="7"/>
<dbReference type="EMBL" id="AM180265">
    <property type="protein sequence ID" value="CAJ55260.1"/>
    <property type="molecule type" value="mRNA"/>
</dbReference>
<dbReference type="SMR" id="Q18DC9"/>
<dbReference type="MEROPS" id="A01.007"/>
<dbReference type="GO" id="GO:0005615">
    <property type="term" value="C:extracellular space"/>
    <property type="evidence" value="ECO:0000314"/>
    <property type="project" value="UniProtKB"/>
</dbReference>
<dbReference type="GO" id="GO:0004190">
    <property type="term" value="F:aspartic-type endopeptidase activity"/>
    <property type="evidence" value="ECO:0000314"/>
    <property type="project" value="UniProtKB"/>
</dbReference>
<dbReference type="GO" id="GO:0002003">
    <property type="term" value="P:angiotensin maturation"/>
    <property type="evidence" value="ECO:0007669"/>
    <property type="project" value="TreeGrafter"/>
</dbReference>
<dbReference type="GO" id="GO:0035814">
    <property type="term" value="P:negative regulation of renal sodium excretion"/>
    <property type="evidence" value="ECO:0000305"/>
    <property type="project" value="UniProtKB"/>
</dbReference>
<dbReference type="GO" id="GO:1905656">
    <property type="term" value="P:positive regulation of artery smooth muscle contraction"/>
    <property type="evidence" value="ECO:0000305"/>
    <property type="project" value="UniProtKB"/>
</dbReference>
<dbReference type="GO" id="GO:0045777">
    <property type="term" value="P:positive regulation of blood pressure"/>
    <property type="evidence" value="ECO:0000305"/>
    <property type="project" value="UniProtKB"/>
</dbReference>
<dbReference type="GO" id="GO:0045907">
    <property type="term" value="P:positive regulation of vasoconstriction"/>
    <property type="evidence" value="ECO:0000305"/>
    <property type="project" value="UniProtKB"/>
</dbReference>
<dbReference type="GO" id="GO:0006508">
    <property type="term" value="P:proteolysis"/>
    <property type="evidence" value="ECO:0000314"/>
    <property type="project" value="UniProtKB"/>
</dbReference>
<dbReference type="FunFam" id="2.40.70.10:FF:000032">
    <property type="entry name" value="renin"/>
    <property type="match status" value="1"/>
</dbReference>
<dbReference type="FunFam" id="2.40.70.10:FF:000002">
    <property type="entry name" value="Vacuolar aspartic proteinase"/>
    <property type="match status" value="1"/>
</dbReference>
<dbReference type="Gene3D" id="2.40.70.10">
    <property type="entry name" value="Acid Proteases"/>
    <property type="match status" value="2"/>
</dbReference>
<dbReference type="InterPro" id="IPR001461">
    <property type="entry name" value="Aspartic_peptidase_A1"/>
</dbReference>
<dbReference type="InterPro" id="IPR001969">
    <property type="entry name" value="Aspartic_peptidase_AS"/>
</dbReference>
<dbReference type="InterPro" id="IPR012848">
    <property type="entry name" value="Aspartic_peptidase_N"/>
</dbReference>
<dbReference type="InterPro" id="IPR033121">
    <property type="entry name" value="PEPTIDASE_A1"/>
</dbReference>
<dbReference type="InterPro" id="IPR021109">
    <property type="entry name" value="Peptidase_aspartic_dom_sf"/>
</dbReference>
<dbReference type="PANTHER" id="PTHR47966">
    <property type="entry name" value="BETA-SITE APP-CLEAVING ENZYME, ISOFORM A-RELATED"/>
    <property type="match status" value="1"/>
</dbReference>
<dbReference type="PANTHER" id="PTHR47966:SF24">
    <property type="entry name" value="RENIN"/>
    <property type="match status" value="1"/>
</dbReference>
<dbReference type="Pfam" id="PF07966">
    <property type="entry name" value="A1_Propeptide"/>
    <property type="match status" value="1"/>
</dbReference>
<dbReference type="Pfam" id="PF00026">
    <property type="entry name" value="Asp"/>
    <property type="match status" value="1"/>
</dbReference>
<dbReference type="PRINTS" id="PR00792">
    <property type="entry name" value="PEPSIN"/>
</dbReference>
<dbReference type="SUPFAM" id="SSF50630">
    <property type="entry name" value="Acid proteases"/>
    <property type="match status" value="1"/>
</dbReference>
<dbReference type="PROSITE" id="PS00141">
    <property type="entry name" value="ASP_PROTEASE"/>
    <property type="match status" value="2"/>
</dbReference>
<dbReference type="PROSITE" id="PS51767">
    <property type="entry name" value="PEPTIDASE_A1"/>
    <property type="match status" value="1"/>
</dbReference>
<accession>Q18DC9</accession>
<organism evidence="11">
    <name type="scientific">Echis ocellatus</name>
    <name type="common">Ocellated saw-scaled viper</name>
    <dbReference type="NCBI Taxonomy" id="99586"/>
    <lineage>
        <taxon>Eukaryota</taxon>
        <taxon>Metazoa</taxon>
        <taxon>Chordata</taxon>
        <taxon>Craniata</taxon>
        <taxon>Vertebrata</taxon>
        <taxon>Euteleostomi</taxon>
        <taxon>Lepidosauria</taxon>
        <taxon>Squamata</taxon>
        <taxon>Bifurcata</taxon>
        <taxon>Unidentata</taxon>
        <taxon>Episquamata</taxon>
        <taxon>Toxicofera</taxon>
        <taxon>Serpentes</taxon>
        <taxon>Colubroidea</taxon>
        <taxon>Viperidae</taxon>
        <taxon>Viperinae</taxon>
        <taxon>Echis</taxon>
    </lineage>
</organism>
<gene>
    <name evidence="11" type="primary">Asp-Eoc51</name>
</gene>
<proteinExistence type="evidence at protein level"/>
<sequence length="395" mass="43872">MLRSWEFVLLISCFLCFSSDALQRISLKKMPSIRETLQEMGMKVADVLPSLKHRISYLDEGLHNKTASTILTNFRDTQYYGEISIGTPAQIFKVVFDTGSSNLWVPSRQCSPLYSACVSHNRYDSSESSTYKPKGTKITLTYAQGYIKGFFSQDIVRVADIPIIQFFTEAIALPSIPFIFARFDGVLGMGYPKQAIGGVIPVFDNIMSEKVLSENVFSVYYSRHSESNTGGEIILGGSDPSHYTGDFHYVSTSREGYWHVDLKGVSIENKIVLCHDGCTATIDTGTSFISGPASSISVLMETIGATLSDGDYVIDCKKINLLPDITFHLGDMTYSLSSSTYVLKFSDETECTVAFMAVDIPPPLGPLWLLGATFIKQYYIEFDRQNNRIGFATSF</sequence>
<evidence type="ECO:0000250" key="1">
    <source>
        <dbReference type="UniProtKB" id="P00797"/>
    </source>
</evidence>
<evidence type="ECO:0000255" key="2"/>
<evidence type="ECO:0000255" key="3">
    <source>
        <dbReference type="PROSITE-ProRule" id="PRU00498"/>
    </source>
</evidence>
<evidence type="ECO:0000255" key="4">
    <source>
        <dbReference type="PROSITE-ProRule" id="PRU01103"/>
    </source>
</evidence>
<evidence type="ECO:0000255" key="5">
    <source>
        <dbReference type="PROSITE-ProRule" id="PRU10094"/>
    </source>
</evidence>
<evidence type="ECO:0000255" key="6">
    <source>
        <dbReference type="RuleBase" id="RU000454"/>
    </source>
</evidence>
<evidence type="ECO:0000269" key="7">
    <source>
    </source>
</evidence>
<evidence type="ECO:0000303" key="8">
    <source>
    </source>
</evidence>
<evidence type="ECO:0000303" key="9">
    <source>
    </source>
</evidence>
<evidence type="ECO:0000305" key="10"/>
<evidence type="ECO:0000312" key="11">
    <source>
        <dbReference type="EMBL" id="CAJ55260.1"/>
    </source>
</evidence>
<feature type="signal peptide" evidence="2">
    <location>
        <begin position="1"/>
        <end position="21"/>
    </location>
</feature>
<feature type="propeptide" id="PRO_0000456882" description="Activation peptide" evidence="2 10">
    <location>
        <begin position="22"/>
        <end position="43"/>
    </location>
</feature>
<feature type="chain" id="PRO_5004187082" description="Renin" evidence="2 10">
    <location>
        <begin position="44"/>
        <end position="395"/>
    </location>
</feature>
<feature type="domain" description="Peptidase A1" evidence="4">
    <location>
        <begin position="79"/>
        <end position="392"/>
    </location>
</feature>
<feature type="active site" evidence="1 5">
    <location>
        <position position="97"/>
    </location>
</feature>
<feature type="active site" evidence="1 5">
    <location>
        <position position="283"/>
    </location>
</feature>
<feature type="glycosylation site" description="N-linked (GlcNAc...) asparagine" evidence="3">
    <location>
        <position position="64"/>
    </location>
</feature>
<feature type="disulfide bond" evidence="1">
    <location>
        <begin position="110"/>
        <end position="117"/>
    </location>
</feature>
<feature type="disulfide bond" evidence="1">
    <location>
        <begin position="274"/>
        <end position="278"/>
    </location>
</feature>
<feature type="disulfide bond" evidence="1 4">
    <location>
        <begin position="316"/>
        <end position="351"/>
    </location>
</feature>
<comment type="function">
    <text evidence="7 10">Renin is a highly specific endopeptidase, whose only known function is to generate angiotensin I from angiotensinogen in the plasma, initiating a cascade of reactions that produce an elevation of blood pressure and increased sodium retention by the kidney (Probable). This protein is also found in snake venom and shown to specifically cleave human and porcine angiotensinogen into angiotensin I. It does not have general protease activity, no cleavage of alpha or beta casein. May be directly responsible for elevation of blood pressure in the victims of envenomation (PubMed:28734982).</text>
</comment>
<comment type="catalytic activity">
    <reaction evidence="7">
        <text>Cleavage of Leu-|-Xaa bond in angiotensinogen to generate angiotensin I.</text>
        <dbReference type="EC" id="3.4.23.15"/>
    </reaction>
</comment>
<comment type="activity regulation">
    <text evidence="7">Inhibited completely by aspartyl protease inhibitor pepstatin A, but not by the serine- or metalloproteinase inhibitors PMSF or EDTA.</text>
</comment>
<comment type="subcellular location">
    <subcellularLocation>
        <location evidence="7">Secreted</location>
    </subcellularLocation>
</comment>
<comment type="tissue specificity">
    <text evidence="7">Expressed by the venom gland (at protein level).</text>
</comment>
<comment type="PTM">
    <text evidence="7">N-glycosylated.</text>
</comment>
<comment type="similarity">
    <text evidence="6">Belongs to the peptidase A1 family.</text>
</comment>
<protein>
    <recommendedName>
        <fullName evidence="10">Renin</fullName>
        <ecNumber evidence="7">3.4.23.15</ecNumber>
    </recommendedName>
    <alternativeName>
        <fullName evidence="10">Angiotensinogenase</fullName>
    </alternativeName>
    <alternativeName>
        <fullName evidence="11">Renin-like aspartic protease</fullName>
    </alternativeName>
    <alternativeName>
        <fullName evidence="8 9">Renin-like aspartic protease EOC51</fullName>
    </alternativeName>
    <alternativeName>
        <fullName evidence="9">SVAP EOC51</fullName>
    </alternativeName>
    <alternativeName>
        <fullName evidence="9">Snake venom aspartic protease EOC51</fullName>
    </alternativeName>
</protein>
<name>RE51_ECHOC</name>
<keyword id="KW-0064">Aspartyl protease</keyword>
<keyword id="KW-0903">Direct protein sequencing</keyword>
<keyword id="KW-1015">Disulfide bond</keyword>
<keyword id="KW-0325">Glycoprotein</keyword>
<keyword id="KW-0378">Hydrolase</keyword>
<keyword id="KW-0645">Protease</keyword>
<keyword id="KW-0964">Secreted</keyword>
<keyword id="KW-0732">Signal</keyword>
<keyword id="KW-0865">Zymogen</keyword>